<organism>
    <name type="scientific">Shigella boydii serotype 18 (strain CDC 3083-94 / BS512)</name>
    <dbReference type="NCBI Taxonomy" id="344609"/>
    <lineage>
        <taxon>Bacteria</taxon>
        <taxon>Pseudomonadati</taxon>
        <taxon>Pseudomonadota</taxon>
        <taxon>Gammaproteobacteria</taxon>
        <taxon>Enterobacterales</taxon>
        <taxon>Enterobacteriaceae</taxon>
        <taxon>Shigella</taxon>
    </lineage>
</organism>
<comment type="function">
    <text evidence="1">Catalyzes the transfer of a methyl group from 5-methyltetrahydrofolate to homocysteine resulting in methionine formation.</text>
</comment>
<comment type="catalytic activity">
    <reaction evidence="1">
        <text>5-methyltetrahydropteroyltri-L-glutamate + L-homocysteine = tetrahydropteroyltri-L-glutamate + L-methionine</text>
        <dbReference type="Rhea" id="RHEA:21196"/>
        <dbReference type="ChEBI" id="CHEBI:57844"/>
        <dbReference type="ChEBI" id="CHEBI:58140"/>
        <dbReference type="ChEBI" id="CHEBI:58199"/>
        <dbReference type="ChEBI" id="CHEBI:58207"/>
        <dbReference type="EC" id="2.1.1.14"/>
    </reaction>
</comment>
<comment type="cofactor">
    <cofactor evidence="1">
        <name>Zn(2+)</name>
        <dbReference type="ChEBI" id="CHEBI:29105"/>
    </cofactor>
    <text evidence="1">Binds 1 zinc ion per subunit.</text>
</comment>
<comment type="pathway">
    <text evidence="1">Amino-acid biosynthesis; L-methionine biosynthesis via de novo pathway; L-methionine from L-homocysteine (MetE route): step 1/1.</text>
</comment>
<comment type="similarity">
    <text evidence="1">Belongs to the vitamin-B12 independent methionine synthase family.</text>
</comment>
<protein>
    <recommendedName>
        <fullName evidence="1">5-methyltetrahydropteroyltriglutamate--homocysteine methyltransferase</fullName>
        <ecNumber evidence="1">2.1.1.14</ecNumber>
    </recommendedName>
    <alternativeName>
        <fullName evidence="1">Cobalamin-independent methionine synthase</fullName>
    </alternativeName>
    <alternativeName>
        <fullName evidence="1">Methionine synthase, vitamin-B12 independent isozyme</fullName>
    </alternativeName>
</protein>
<reference key="1">
    <citation type="submission" date="2008-05" db="EMBL/GenBank/DDBJ databases">
        <title>Complete sequence of Shigella boydii serotype 18 strain BS512.</title>
        <authorList>
            <person name="Rasko D.A."/>
            <person name="Rosovitz M."/>
            <person name="Maurelli A.T."/>
            <person name="Myers G."/>
            <person name="Seshadri R."/>
            <person name="Cer R."/>
            <person name="Jiang L."/>
            <person name="Ravel J."/>
            <person name="Sebastian Y."/>
        </authorList>
    </citation>
    <scope>NUCLEOTIDE SEQUENCE [LARGE SCALE GENOMIC DNA]</scope>
    <source>
        <strain>CDC 3083-94 / BS512</strain>
    </source>
</reference>
<name>METE_SHIB3</name>
<accession>B2TVH5</accession>
<dbReference type="EC" id="2.1.1.14" evidence="1"/>
<dbReference type="EMBL" id="CP001063">
    <property type="protein sequence ID" value="ACD10515.1"/>
    <property type="molecule type" value="Genomic_DNA"/>
</dbReference>
<dbReference type="RefSeq" id="WP_000153926.1">
    <property type="nucleotide sequence ID" value="NC_010658.1"/>
</dbReference>
<dbReference type="SMR" id="B2TVH5"/>
<dbReference type="STRING" id="344609.SbBS512_E4295"/>
<dbReference type="KEGG" id="sbc:SbBS512_E4295"/>
<dbReference type="HOGENOM" id="CLU_013175_0_0_6"/>
<dbReference type="UniPathway" id="UPA00051">
    <property type="reaction ID" value="UER00082"/>
</dbReference>
<dbReference type="Proteomes" id="UP000001030">
    <property type="component" value="Chromosome"/>
</dbReference>
<dbReference type="GO" id="GO:0003871">
    <property type="term" value="F:5-methyltetrahydropteroyltriglutamate-homocysteine S-methyltransferase activity"/>
    <property type="evidence" value="ECO:0007669"/>
    <property type="project" value="UniProtKB-UniRule"/>
</dbReference>
<dbReference type="GO" id="GO:0008270">
    <property type="term" value="F:zinc ion binding"/>
    <property type="evidence" value="ECO:0007669"/>
    <property type="project" value="InterPro"/>
</dbReference>
<dbReference type="GO" id="GO:0009086">
    <property type="term" value="P:methionine biosynthetic process"/>
    <property type="evidence" value="ECO:0007669"/>
    <property type="project" value="UniProtKB-UniRule"/>
</dbReference>
<dbReference type="GO" id="GO:0032259">
    <property type="term" value="P:methylation"/>
    <property type="evidence" value="ECO:0007669"/>
    <property type="project" value="UniProtKB-KW"/>
</dbReference>
<dbReference type="CDD" id="cd03311">
    <property type="entry name" value="CIMS_C_terminal_like"/>
    <property type="match status" value="1"/>
</dbReference>
<dbReference type="CDD" id="cd03312">
    <property type="entry name" value="CIMS_N_terminal_like"/>
    <property type="match status" value="1"/>
</dbReference>
<dbReference type="FunFam" id="3.20.20.210:FF:000002">
    <property type="entry name" value="5-methyltetrahydropteroyltriglutamate--homocysteine methyltransferase"/>
    <property type="match status" value="1"/>
</dbReference>
<dbReference type="FunFam" id="3.20.20.210:FF:000003">
    <property type="entry name" value="5-methyltetrahydropteroyltriglutamate--homocysteine methyltransferase"/>
    <property type="match status" value="1"/>
</dbReference>
<dbReference type="Gene3D" id="3.20.20.210">
    <property type="match status" value="2"/>
</dbReference>
<dbReference type="HAMAP" id="MF_00172">
    <property type="entry name" value="Meth_synth"/>
    <property type="match status" value="1"/>
</dbReference>
<dbReference type="InterPro" id="IPR013215">
    <property type="entry name" value="Cbl-indep_Met_Synth_N"/>
</dbReference>
<dbReference type="InterPro" id="IPR006276">
    <property type="entry name" value="Cobalamin-indep_Met_synthase"/>
</dbReference>
<dbReference type="InterPro" id="IPR002629">
    <property type="entry name" value="Met_Synth_C/arc"/>
</dbReference>
<dbReference type="InterPro" id="IPR038071">
    <property type="entry name" value="UROD/MetE-like_sf"/>
</dbReference>
<dbReference type="NCBIfam" id="TIGR01371">
    <property type="entry name" value="met_syn_B12ind"/>
    <property type="match status" value="1"/>
</dbReference>
<dbReference type="NCBIfam" id="NF003556">
    <property type="entry name" value="PRK05222.1"/>
    <property type="match status" value="1"/>
</dbReference>
<dbReference type="PANTHER" id="PTHR30519">
    <property type="entry name" value="5-METHYLTETRAHYDROPTEROYLTRIGLUTAMATE--HOMOCYSTEINE METHYLTRANSFERASE"/>
    <property type="match status" value="1"/>
</dbReference>
<dbReference type="Pfam" id="PF08267">
    <property type="entry name" value="Meth_synt_1"/>
    <property type="match status" value="1"/>
</dbReference>
<dbReference type="Pfam" id="PF01717">
    <property type="entry name" value="Meth_synt_2"/>
    <property type="match status" value="1"/>
</dbReference>
<dbReference type="PIRSF" id="PIRSF000382">
    <property type="entry name" value="MeTrfase_B12_ind"/>
    <property type="match status" value="1"/>
</dbReference>
<dbReference type="SUPFAM" id="SSF51726">
    <property type="entry name" value="UROD/MetE-like"/>
    <property type="match status" value="2"/>
</dbReference>
<sequence length="753" mass="84674">MTILNHTLGFPRVGLRRELKKAQESYWAGNSTREELLAVGRELRARHWDQQKQAGIDLLPVGDFAWYDHVLTTSLLLGNVPARHQNKDGSVDIDTLFRIGRGRAPTGEPAAAAEMTKWFNTNYHYMVPEFVKGQQFKLTWTQLLEEVDEALALGHNVKPVLLGPVTWLWLGKVKGEQFDRLSLLNDILPVYQQVLAELEKRGIEWVQIDEPALVLELPQAWLDAYKPAYDALQGQVKLLLTTYFEGVTPNLDTITALPVQGLHVDLVHGKDGVAELHKRLPSDWLLSAGLINGRNVWRADLTEKYAQIKDIVGKRDLWVASSCSLLHSPIDLSVETRLDAEVKSWFAFALQKCHELALLRDALKSGDTAALAEWSAPIQARRHSTRVHNPAVEKRLAAITAQDSQRANVYEVRAEAQRARFKLPAWPTTTIGSFPQTTEIRTLRLDFKKGNLDANNYRTGIAEHIKQAIVEQERLGLDVLVHGEAERNDMVEYFGEHLDGFVFTQNGWVQSYGSRCVKPPIVIGDVSRPAPITVEWAKYAQSLTDKPVKGMLTGPVTILCWSFPREDVSRETIAKQIALALRDEVADLEAAGIGIIQIDEPALREGLPLRRSDWDAYLQWGVEAFRINAAVAKDDTQIHTHMCYCEFNDIMDSIAALDADVITIETSRSDMELLESFEEFDYPNEIGPGVYDIHSPNVPSVEWIEALLKKAAKRIPAERLWVNPDCGLKTRGWPETRAALANMVQAAQNLRRG</sequence>
<keyword id="KW-0028">Amino-acid biosynthesis</keyword>
<keyword id="KW-0479">Metal-binding</keyword>
<keyword id="KW-0486">Methionine biosynthesis</keyword>
<keyword id="KW-0489">Methyltransferase</keyword>
<keyword id="KW-1185">Reference proteome</keyword>
<keyword id="KW-0677">Repeat</keyword>
<keyword id="KW-0808">Transferase</keyword>
<keyword id="KW-0862">Zinc</keyword>
<gene>
    <name evidence="1" type="primary">metE</name>
    <name type="ordered locus">SbBS512_E4295</name>
</gene>
<proteinExistence type="inferred from homology"/>
<feature type="chain" id="PRO_1000097845" description="5-methyltetrahydropteroyltriglutamate--homocysteine methyltransferase">
    <location>
        <begin position="1"/>
        <end position="753"/>
    </location>
</feature>
<feature type="active site" description="Proton donor" evidence="1">
    <location>
        <position position="694"/>
    </location>
</feature>
<feature type="binding site" evidence="1">
    <location>
        <begin position="17"/>
        <end position="20"/>
    </location>
    <ligand>
        <name>5-methyltetrahydropteroyltri-L-glutamate</name>
        <dbReference type="ChEBI" id="CHEBI:58207"/>
    </ligand>
</feature>
<feature type="binding site" evidence="1">
    <location>
        <position position="117"/>
    </location>
    <ligand>
        <name>5-methyltetrahydropteroyltri-L-glutamate</name>
        <dbReference type="ChEBI" id="CHEBI:58207"/>
    </ligand>
</feature>
<feature type="binding site" evidence="1">
    <location>
        <begin position="431"/>
        <end position="433"/>
    </location>
    <ligand>
        <name>L-homocysteine</name>
        <dbReference type="ChEBI" id="CHEBI:58199"/>
    </ligand>
</feature>
<feature type="binding site" evidence="1">
    <location>
        <begin position="431"/>
        <end position="433"/>
    </location>
    <ligand>
        <name>L-methionine</name>
        <dbReference type="ChEBI" id="CHEBI:57844"/>
    </ligand>
</feature>
<feature type="binding site" evidence="1">
    <location>
        <position position="484"/>
    </location>
    <ligand>
        <name>L-homocysteine</name>
        <dbReference type="ChEBI" id="CHEBI:58199"/>
    </ligand>
</feature>
<feature type="binding site" evidence="1">
    <location>
        <position position="484"/>
    </location>
    <ligand>
        <name>L-methionine</name>
        <dbReference type="ChEBI" id="CHEBI:57844"/>
    </ligand>
</feature>
<feature type="binding site" evidence="1">
    <location>
        <begin position="515"/>
        <end position="516"/>
    </location>
    <ligand>
        <name>5-methyltetrahydropteroyltri-L-glutamate</name>
        <dbReference type="ChEBI" id="CHEBI:58207"/>
    </ligand>
</feature>
<feature type="binding site" evidence="1">
    <location>
        <position position="561"/>
    </location>
    <ligand>
        <name>5-methyltetrahydropteroyltri-L-glutamate</name>
        <dbReference type="ChEBI" id="CHEBI:58207"/>
    </ligand>
</feature>
<feature type="binding site" evidence="1">
    <location>
        <position position="599"/>
    </location>
    <ligand>
        <name>L-homocysteine</name>
        <dbReference type="ChEBI" id="CHEBI:58199"/>
    </ligand>
</feature>
<feature type="binding site" evidence="1">
    <location>
        <position position="599"/>
    </location>
    <ligand>
        <name>L-methionine</name>
        <dbReference type="ChEBI" id="CHEBI:57844"/>
    </ligand>
</feature>
<feature type="binding site" evidence="1">
    <location>
        <position position="605"/>
    </location>
    <ligand>
        <name>5-methyltetrahydropteroyltri-L-glutamate</name>
        <dbReference type="ChEBI" id="CHEBI:58207"/>
    </ligand>
</feature>
<feature type="binding site" evidence="1">
    <location>
        <position position="641"/>
    </location>
    <ligand>
        <name>Zn(2+)</name>
        <dbReference type="ChEBI" id="CHEBI:29105"/>
        <note>catalytic</note>
    </ligand>
</feature>
<feature type="binding site" evidence="1">
    <location>
        <position position="643"/>
    </location>
    <ligand>
        <name>Zn(2+)</name>
        <dbReference type="ChEBI" id="CHEBI:29105"/>
        <note>catalytic</note>
    </ligand>
</feature>
<feature type="binding site" evidence="1">
    <location>
        <position position="665"/>
    </location>
    <ligand>
        <name>Zn(2+)</name>
        <dbReference type="ChEBI" id="CHEBI:29105"/>
        <note>catalytic</note>
    </ligand>
</feature>
<feature type="binding site" evidence="1">
    <location>
        <position position="726"/>
    </location>
    <ligand>
        <name>Zn(2+)</name>
        <dbReference type="ChEBI" id="CHEBI:29105"/>
        <note>catalytic</note>
    </ligand>
</feature>
<evidence type="ECO:0000255" key="1">
    <source>
        <dbReference type="HAMAP-Rule" id="MF_00172"/>
    </source>
</evidence>